<comment type="function">
    <text evidence="1">Fluoride-specific ion channel. Important for reducing fluoride concentration in the cell, thus reducing its toxicity.</text>
</comment>
<comment type="catalytic activity">
    <reaction evidence="1">
        <text>fluoride(in) = fluoride(out)</text>
        <dbReference type="Rhea" id="RHEA:76159"/>
        <dbReference type="ChEBI" id="CHEBI:17051"/>
    </reaction>
    <physiologicalReaction direction="left-to-right" evidence="1">
        <dbReference type="Rhea" id="RHEA:76160"/>
    </physiologicalReaction>
</comment>
<comment type="activity regulation">
    <text evidence="1">Na(+) is not transported, but it plays an essential structural role and its presence is essential for fluoride channel function.</text>
</comment>
<comment type="subcellular location">
    <subcellularLocation>
        <location evidence="1">Cell inner membrane</location>
        <topology evidence="1">Multi-pass membrane protein</topology>
    </subcellularLocation>
</comment>
<comment type="similarity">
    <text evidence="1">Belongs to the fluoride channel Fluc/FEX (TC 1.A.43) family.</text>
</comment>
<organism>
    <name type="scientific">Caulobacter vibrioides (strain NA1000 / CB15N)</name>
    <name type="common">Caulobacter crescentus</name>
    <dbReference type="NCBI Taxonomy" id="565050"/>
    <lineage>
        <taxon>Bacteria</taxon>
        <taxon>Pseudomonadati</taxon>
        <taxon>Pseudomonadota</taxon>
        <taxon>Alphaproteobacteria</taxon>
        <taxon>Caulobacterales</taxon>
        <taxon>Caulobacteraceae</taxon>
        <taxon>Caulobacter</taxon>
    </lineage>
</organism>
<accession>B8GX35</accession>
<dbReference type="EMBL" id="CP001340">
    <property type="protein sequence ID" value="ACL95525.1"/>
    <property type="molecule type" value="Genomic_DNA"/>
</dbReference>
<dbReference type="RefSeq" id="WP_010919847.1">
    <property type="nucleotide sequence ID" value="NC_011916.1"/>
</dbReference>
<dbReference type="RefSeq" id="YP_002517433.1">
    <property type="nucleotide sequence ID" value="NC_011916.1"/>
</dbReference>
<dbReference type="SMR" id="B8GX35"/>
<dbReference type="GeneID" id="7333392"/>
<dbReference type="KEGG" id="ccs:CCNA_02060"/>
<dbReference type="PATRIC" id="fig|565050.3.peg.2018"/>
<dbReference type="HOGENOM" id="CLU_114342_2_3_5"/>
<dbReference type="OrthoDB" id="9806299at2"/>
<dbReference type="PhylomeDB" id="B8GX35"/>
<dbReference type="Proteomes" id="UP000001364">
    <property type="component" value="Chromosome"/>
</dbReference>
<dbReference type="GO" id="GO:0005886">
    <property type="term" value="C:plasma membrane"/>
    <property type="evidence" value="ECO:0007669"/>
    <property type="project" value="UniProtKB-SubCell"/>
</dbReference>
<dbReference type="GO" id="GO:0062054">
    <property type="term" value="F:fluoride channel activity"/>
    <property type="evidence" value="ECO:0007669"/>
    <property type="project" value="UniProtKB-UniRule"/>
</dbReference>
<dbReference type="GO" id="GO:0046872">
    <property type="term" value="F:metal ion binding"/>
    <property type="evidence" value="ECO:0007669"/>
    <property type="project" value="UniProtKB-KW"/>
</dbReference>
<dbReference type="GO" id="GO:0140114">
    <property type="term" value="P:cellular detoxification of fluoride"/>
    <property type="evidence" value="ECO:0007669"/>
    <property type="project" value="UniProtKB-UniRule"/>
</dbReference>
<dbReference type="HAMAP" id="MF_00454">
    <property type="entry name" value="FluC"/>
    <property type="match status" value="1"/>
</dbReference>
<dbReference type="InterPro" id="IPR003691">
    <property type="entry name" value="FluC"/>
</dbReference>
<dbReference type="NCBIfam" id="TIGR00494">
    <property type="entry name" value="crcB"/>
    <property type="match status" value="1"/>
</dbReference>
<dbReference type="NCBIfam" id="NF010791">
    <property type="entry name" value="PRK14195.1"/>
    <property type="match status" value="1"/>
</dbReference>
<dbReference type="PANTHER" id="PTHR28259">
    <property type="entry name" value="FLUORIDE EXPORT PROTEIN 1-RELATED"/>
    <property type="match status" value="1"/>
</dbReference>
<dbReference type="PANTHER" id="PTHR28259:SF1">
    <property type="entry name" value="FLUORIDE EXPORT PROTEIN 1-RELATED"/>
    <property type="match status" value="1"/>
</dbReference>
<dbReference type="Pfam" id="PF02537">
    <property type="entry name" value="CRCB"/>
    <property type="match status" value="1"/>
</dbReference>
<name>FLUC_CAUVN</name>
<protein>
    <recommendedName>
        <fullName evidence="1">Fluoride-specific ion channel FluC</fullName>
    </recommendedName>
</protein>
<proteinExistence type="inferred from homology"/>
<evidence type="ECO:0000255" key="1">
    <source>
        <dbReference type="HAMAP-Rule" id="MF_00454"/>
    </source>
</evidence>
<sequence length="127" mass="13230">MNKLLLVAAGGAVGSVARYLVGVGAMRVMGPGWPYGTFTVNVVGGFLMGCLASWLAHRGNTSSETWRVMLGVGVLGGFTTFSSFSLETALMIQKRAYGQAFTYSAASVLLAIAALFAGLLVARKVFA</sequence>
<keyword id="KW-0997">Cell inner membrane</keyword>
<keyword id="KW-1003">Cell membrane</keyword>
<keyword id="KW-0407">Ion channel</keyword>
<keyword id="KW-0406">Ion transport</keyword>
<keyword id="KW-0472">Membrane</keyword>
<keyword id="KW-0479">Metal-binding</keyword>
<keyword id="KW-1185">Reference proteome</keyword>
<keyword id="KW-0915">Sodium</keyword>
<keyword id="KW-0812">Transmembrane</keyword>
<keyword id="KW-1133">Transmembrane helix</keyword>
<keyword id="KW-0813">Transport</keyword>
<reference key="1">
    <citation type="journal article" date="2010" name="J. Bacteriol.">
        <title>The genetic basis of laboratory adaptation in Caulobacter crescentus.</title>
        <authorList>
            <person name="Marks M.E."/>
            <person name="Castro-Rojas C.M."/>
            <person name="Teiling C."/>
            <person name="Du L."/>
            <person name="Kapatral V."/>
            <person name="Walunas T.L."/>
            <person name="Crosson S."/>
        </authorList>
    </citation>
    <scope>NUCLEOTIDE SEQUENCE [LARGE SCALE GENOMIC DNA]</scope>
    <source>
        <strain>NA1000 / CB15N</strain>
    </source>
</reference>
<feature type="chain" id="PRO_1000135316" description="Fluoride-specific ion channel FluC">
    <location>
        <begin position="1"/>
        <end position="127"/>
    </location>
</feature>
<feature type="transmembrane region" description="Helical" evidence="1">
    <location>
        <begin position="4"/>
        <end position="24"/>
    </location>
</feature>
<feature type="transmembrane region" description="Helical" evidence="1">
    <location>
        <begin position="36"/>
        <end position="56"/>
    </location>
</feature>
<feature type="transmembrane region" description="Helical" evidence="1">
    <location>
        <begin position="72"/>
        <end position="92"/>
    </location>
</feature>
<feature type="transmembrane region" description="Helical" evidence="1">
    <location>
        <begin position="101"/>
        <end position="121"/>
    </location>
</feature>
<feature type="binding site" evidence="1">
    <location>
        <position position="76"/>
    </location>
    <ligand>
        <name>Na(+)</name>
        <dbReference type="ChEBI" id="CHEBI:29101"/>
        <note>structural</note>
    </ligand>
</feature>
<feature type="binding site" evidence="1">
    <location>
        <position position="79"/>
    </location>
    <ligand>
        <name>Na(+)</name>
        <dbReference type="ChEBI" id="CHEBI:29101"/>
        <note>structural</note>
    </ligand>
</feature>
<gene>
    <name evidence="1" type="primary">fluC</name>
    <name evidence="1" type="synonym">crcB</name>
    <name type="ordered locus">CCNA_02060</name>
</gene>